<comment type="function">
    <text evidence="1">This protein specifically catalyzes the removal of signal peptides from prolipoproteins.</text>
</comment>
<comment type="catalytic activity">
    <reaction evidence="1">
        <text>Release of signal peptides from bacterial membrane prolipoproteins. Hydrolyzes -Xaa-Yaa-Zaa-|-(S,diacylglyceryl)Cys-, in which Xaa is hydrophobic (preferably Leu), and Yaa (Ala or Ser) and Zaa (Gly or Ala) have small, neutral side chains.</text>
        <dbReference type="EC" id="3.4.23.36"/>
    </reaction>
</comment>
<comment type="pathway">
    <text evidence="1">Protein modification; lipoprotein biosynthesis (signal peptide cleavage).</text>
</comment>
<comment type="subcellular location">
    <subcellularLocation>
        <location evidence="1">Cell membrane</location>
        <topology evidence="1">Multi-pass membrane protein</topology>
    </subcellularLocation>
</comment>
<comment type="similarity">
    <text evidence="1">Belongs to the peptidase A8 family.</text>
</comment>
<reference key="1">
    <citation type="journal article" date="2008" name="Chem. Biol. Interact.">
        <title>Extending the Bacillus cereus group genomics to putative food-borne pathogens of different toxicity.</title>
        <authorList>
            <person name="Lapidus A."/>
            <person name="Goltsman E."/>
            <person name="Auger S."/>
            <person name="Galleron N."/>
            <person name="Segurens B."/>
            <person name="Dossat C."/>
            <person name="Land M.L."/>
            <person name="Broussolle V."/>
            <person name="Brillard J."/>
            <person name="Guinebretiere M.-H."/>
            <person name="Sanchis V."/>
            <person name="Nguen-the C."/>
            <person name="Lereclus D."/>
            <person name="Richardson P."/>
            <person name="Wincker P."/>
            <person name="Weissenbach J."/>
            <person name="Ehrlich S.D."/>
            <person name="Sorokin A."/>
        </authorList>
    </citation>
    <scope>NUCLEOTIDE SEQUENCE [LARGE SCALE GENOMIC DNA]</scope>
    <source>
        <strain>KBAB4</strain>
    </source>
</reference>
<evidence type="ECO:0000255" key="1">
    <source>
        <dbReference type="HAMAP-Rule" id="MF_00161"/>
    </source>
</evidence>
<protein>
    <recommendedName>
        <fullName evidence="1">Lipoprotein signal peptidase</fullName>
        <ecNumber evidence="1">3.4.23.36</ecNumber>
    </recommendedName>
    <alternativeName>
        <fullName evidence="1">Prolipoprotein signal peptidase</fullName>
    </alternativeName>
    <alternativeName>
        <fullName evidence="1">Signal peptidase II</fullName>
        <shortName evidence="1">SPase II</shortName>
    </alternativeName>
</protein>
<accession>A9VTD3</accession>
<dbReference type="EC" id="3.4.23.36" evidence="1"/>
<dbReference type="EMBL" id="CP000903">
    <property type="protein sequence ID" value="ABY44889.1"/>
    <property type="molecule type" value="Genomic_DNA"/>
</dbReference>
<dbReference type="RefSeq" id="WP_002128849.1">
    <property type="nucleotide sequence ID" value="NC_010184.1"/>
</dbReference>
<dbReference type="SMR" id="A9VTD3"/>
<dbReference type="GeneID" id="66266540"/>
<dbReference type="KEGG" id="bwe:BcerKBAB4_3720"/>
<dbReference type="eggNOG" id="COG0597">
    <property type="taxonomic scope" value="Bacteria"/>
</dbReference>
<dbReference type="HOGENOM" id="CLU_083252_3_0_9"/>
<dbReference type="UniPathway" id="UPA00665"/>
<dbReference type="Proteomes" id="UP000002154">
    <property type="component" value="Chromosome"/>
</dbReference>
<dbReference type="GO" id="GO:0005886">
    <property type="term" value="C:plasma membrane"/>
    <property type="evidence" value="ECO:0007669"/>
    <property type="project" value="UniProtKB-SubCell"/>
</dbReference>
<dbReference type="GO" id="GO:0004190">
    <property type="term" value="F:aspartic-type endopeptidase activity"/>
    <property type="evidence" value="ECO:0007669"/>
    <property type="project" value="UniProtKB-UniRule"/>
</dbReference>
<dbReference type="GO" id="GO:0006508">
    <property type="term" value="P:proteolysis"/>
    <property type="evidence" value="ECO:0007669"/>
    <property type="project" value="UniProtKB-KW"/>
</dbReference>
<dbReference type="HAMAP" id="MF_00161">
    <property type="entry name" value="LspA"/>
    <property type="match status" value="1"/>
</dbReference>
<dbReference type="InterPro" id="IPR001872">
    <property type="entry name" value="Peptidase_A8"/>
</dbReference>
<dbReference type="NCBIfam" id="TIGR00077">
    <property type="entry name" value="lspA"/>
    <property type="match status" value="1"/>
</dbReference>
<dbReference type="PANTHER" id="PTHR33695">
    <property type="entry name" value="LIPOPROTEIN SIGNAL PEPTIDASE"/>
    <property type="match status" value="1"/>
</dbReference>
<dbReference type="PANTHER" id="PTHR33695:SF1">
    <property type="entry name" value="LIPOPROTEIN SIGNAL PEPTIDASE"/>
    <property type="match status" value="1"/>
</dbReference>
<dbReference type="Pfam" id="PF01252">
    <property type="entry name" value="Peptidase_A8"/>
    <property type="match status" value="1"/>
</dbReference>
<dbReference type="PRINTS" id="PR00781">
    <property type="entry name" value="LIPOSIGPTASE"/>
</dbReference>
<dbReference type="PROSITE" id="PS00855">
    <property type="entry name" value="SPASE_II"/>
    <property type="match status" value="1"/>
</dbReference>
<proteinExistence type="inferred from homology"/>
<gene>
    <name evidence="1" type="primary">lspA</name>
    <name type="ordered locus">BcerKBAB4_3720</name>
</gene>
<feature type="chain" id="PRO_1000190794" description="Lipoprotein signal peptidase">
    <location>
        <begin position="1"/>
        <end position="152"/>
    </location>
</feature>
<feature type="transmembrane region" description="Helical" evidence="1">
    <location>
        <begin position="55"/>
        <end position="75"/>
    </location>
</feature>
<feature type="transmembrane region" description="Helical" evidence="1">
    <location>
        <begin position="85"/>
        <end position="105"/>
    </location>
</feature>
<feature type="transmembrane region" description="Helical" evidence="1">
    <location>
        <begin position="124"/>
        <end position="144"/>
    </location>
</feature>
<feature type="active site" evidence="1">
    <location>
        <position position="111"/>
    </location>
</feature>
<feature type="active site" evidence="1">
    <location>
        <position position="129"/>
    </location>
</feature>
<sequence>MIYYVIALFVIAIDQISKWLIVKNMELGTSIPIIDNVLYITSHRNRGAAWGILENKMWFFYIITVIFVAFIVFYMKKYAKTDKLLGISLGLILGGAIGNFIDRVFRQEVVDFIHVYIFSYNYPVFNIADSALCIGVVLIIIQTVLEGKKAKE</sequence>
<name>LSPA_BACMK</name>
<organism>
    <name type="scientific">Bacillus mycoides (strain KBAB4)</name>
    <name type="common">Bacillus weihenstephanensis</name>
    <dbReference type="NCBI Taxonomy" id="315730"/>
    <lineage>
        <taxon>Bacteria</taxon>
        <taxon>Bacillati</taxon>
        <taxon>Bacillota</taxon>
        <taxon>Bacilli</taxon>
        <taxon>Bacillales</taxon>
        <taxon>Bacillaceae</taxon>
        <taxon>Bacillus</taxon>
        <taxon>Bacillus cereus group</taxon>
    </lineage>
</organism>
<keyword id="KW-0064">Aspartyl protease</keyword>
<keyword id="KW-1003">Cell membrane</keyword>
<keyword id="KW-0378">Hydrolase</keyword>
<keyword id="KW-0472">Membrane</keyword>
<keyword id="KW-0645">Protease</keyword>
<keyword id="KW-0812">Transmembrane</keyword>
<keyword id="KW-1133">Transmembrane helix</keyword>